<sequence length="19" mass="2244">GCIGRNESQKKDNVYKFKE</sequence>
<dbReference type="PIR" id="C39305">
    <property type="entry name" value="C39305"/>
</dbReference>
<dbReference type="ArachnoServer" id="AS000275">
    <property type="toxin name" value="U7-ctenitoxin-Pn1b (N-terminal fragment)"/>
</dbReference>
<dbReference type="GO" id="GO:0005576">
    <property type="term" value="C:extracellular region"/>
    <property type="evidence" value="ECO:0007669"/>
    <property type="project" value="UniProtKB-SubCell"/>
</dbReference>
<dbReference type="GO" id="GO:0005246">
    <property type="term" value="F:calcium channel regulator activity"/>
    <property type="evidence" value="ECO:0007669"/>
    <property type="project" value="UniProtKB-KW"/>
</dbReference>
<dbReference type="GO" id="GO:0090729">
    <property type="term" value="F:toxin activity"/>
    <property type="evidence" value="ECO:0007669"/>
    <property type="project" value="UniProtKB-KW"/>
</dbReference>
<reference key="1">
    <citation type="journal article" date="1991" name="Toxicon">
        <title>Isolation of neurotoxic peptides from the venom of the 'armed' spider Phoneutria nigriventer.</title>
        <authorList>
            <person name="Rezende L. Jr."/>
            <person name="Cordeiro M.N."/>
            <person name="Oliveira E.B."/>
            <person name="Diniz C.R."/>
        </authorList>
    </citation>
    <scope>PROTEIN SEQUENCE</scope>
    <source>
        <tissue>Venom</tissue>
    </source>
</reference>
<comment type="function">
    <text evidence="1">Antagonist of L-type calcium channels (Cav1/CACNA1).</text>
</comment>
<comment type="subcellular location">
    <subcellularLocation>
        <location>Secreted</location>
    </subcellularLocation>
</comment>
<comment type="tissue specificity">
    <text evidence="2">Expressed by the venom gland.</text>
</comment>
<feature type="chain" id="PRO_0000087642" description="U7-ctenitoxin-Pn1b">
    <location>
        <begin position="1"/>
        <end position="19" status="greater than"/>
    </location>
</feature>
<feature type="non-terminal residue">
    <location>
        <position position="19"/>
    </location>
</feature>
<keyword id="KW-0108">Calcium channel impairing toxin</keyword>
<keyword id="KW-0903">Direct protein sequencing</keyword>
<keyword id="KW-0872">Ion channel impairing toxin</keyword>
<keyword id="KW-0528">Neurotoxin</keyword>
<keyword id="KW-0964">Secreted</keyword>
<keyword id="KW-0800">Toxin</keyword>
<keyword id="KW-1218">Voltage-gated calcium channel impairing toxin</keyword>
<name>TX3_PHONI</name>
<accession>P31010</accession>
<proteinExistence type="evidence at protein level"/>
<evidence type="ECO:0000250" key="1"/>
<evidence type="ECO:0000305" key="2"/>
<organism>
    <name type="scientific">Phoneutria nigriventer</name>
    <name type="common">Brazilian armed spider</name>
    <name type="synonym">Ctenus nigriventer</name>
    <dbReference type="NCBI Taxonomy" id="6918"/>
    <lineage>
        <taxon>Eukaryota</taxon>
        <taxon>Metazoa</taxon>
        <taxon>Ecdysozoa</taxon>
        <taxon>Arthropoda</taxon>
        <taxon>Chelicerata</taxon>
        <taxon>Arachnida</taxon>
        <taxon>Araneae</taxon>
        <taxon>Araneomorphae</taxon>
        <taxon>Entelegynae</taxon>
        <taxon>Lycosoidea</taxon>
        <taxon>Ctenidae</taxon>
        <taxon>Phoneutria</taxon>
    </lineage>
</organism>
<protein>
    <recommendedName>
        <fullName>U7-ctenitoxin-Pn1b</fullName>
        <shortName>U7-CNTX-Pn1b</shortName>
    </recommendedName>
    <alternativeName>
        <fullName>Neurotoxin Tx3</fullName>
    </alternativeName>
</protein>